<protein>
    <recommendedName>
        <fullName evidence="1">Prokaryotic ubiquitin-like protein Pup</fullName>
    </recommendedName>
    <alternativeName>
        <fullName evidence="1">Bacterial ubiquitin-like modifier</fullName>
    </alternativeName>
</protein>
<sequence>MAQEQTKRGGGGDDEDDFASSTAAGQERREKLAEDTDDLLDEIDDVLEENAEDFVRAYVQKGGQ</sequence>
<evidence type="ECO:0000255" key="1">
    <source>
        <dbReference type="HAMAP-Rule" id="MF_02106"/>
    </source>
</evidence>
<evidence type="ECO:0000256" key="2">
    <source>
        <dbReference type="SAM" id="MobiDB-lite"/>
    </source>
</evidence>
<accession>A0QFB4</accession>
<dbReference type="EMBL" id="CP000479">
    <property type="protein sequence ID" value="ABK65578.1"/>
    <property type="molecule type" value="Genomic_DNA"/>
</dbReference>
<dbReference type="RefSeq" id="WP_003872163.1">
    <property type="nucleotide sequence ID" value="NC_008595.1"/>
</dbReference>
<dbReference type="SMR" id="A0QFB4"/>
<dbReference type="KEGG" id="mav:MAV_2403"/>
<dbReference type="HOGENOM" id="CLU_183816_1_0_11"/>
<dbReference type="UniPathway" id="UPA00997"/>
<dbReference type="Proteomes" id="UP000001574">
    <property type="component" value="Chromosome"/>
</dbReference>
<dbReference type="GO" id="GO:0070628">
    <property type="term" value="F:proteasome binding"/>
    <property type="evidence" value="ECO:0007669"/>
    <property type="project" value="UniProtKB-UniRule"/>
</dbReference>
<dbReference type="GO" id="GO:0031386">
    <property type="term" value="F:protein tag activity"/>
    <property type="evidence" value="ECO:0007669"/>
    <property type="project" value="UniProtKB-UniRule"/>
</dbReference>
<dbReference type="GO" id="GO:0019941">
    <property type="term" value="P:modification-dependent protein catabolic process"/>
    <property type="evidence" value="ECO:0007669"/>
    <property type="project" value="UniProtKB-UniRule"/>
</dbReference>
<dbReference type="GO" id="GO:0010498">
    <property type="term" value="P:proteasomal protein catabolic process"/>
    <property type="evidence" value="ECO:0007669"/>
    <property type="project" value="UniProtKB-UniRule"/>
</dbReference>
<dbReference type="GO" id="GO:0070490">
    <property type="term" value="P:protein pupylation"/>
    <property type="evidence" value="ECO:0007669"/>
    <property type="project" value="UniProtKB-UniRule"/>
</dbReference>
<dbReference type="HAMAP" id="MF_02106">
    <property type="entry name" value="Pup"/>
    <property type="match status" value="1"/>
</dbReference>
<dbReference type="InterPro" id="IPR008515">
    <property type="entry name" value="Ubiquitin-like_Pup"/>
</dbReference>
<dbReference type="NCBIfam" id="TIGR03687">
    <property type="entry name" value="pupylate_cterm"/>
    <property type="match status" value="1"/>
</dbReference>
<dbReference type="Pfam" id="PF05639">
    <property type="entry name" value="Pup"/>
    <property type="match status" value="1"/>
</dbReference>
<organism>
    <name type="scientific">Mycobacterium avium (strain 104)</name>
    <dbReference type="NCBI Taxonomy" id="243243"/>
    <lineage>
        <taxon>Bacteria</taxon>
        <taxon>Bacillati</taxon>
        <taxon>Actinomycetota</taxon>
        <taxon>Actinomycetes</taxon>
        <taxon>Mycobacteriales</taxon>
        <taxon>Mycobacteriaceae</taxon>
        <taxon>Mycobacterium</taxon>
        <taxon>Mycobacterium avium complex (MAC)</taxon>
    </lineage>
</organism>
<reference key="1">
    <citation type="submission" date="2006-10" db="EMBL/GenBank/DDBJ databases">
        <authorList>
            <person name="Fleischmann R.D."/>
            <person name="Dodson R.J."/>
            <person name="Haft D.H."/>
            <person name="Merkel J.S."/>
            <person name="Nelson W.C."/>
            <person name="Fraser C.M."/>
        </authorList>
    </citation>
    <scope>NUCLEOTIDE SEQUENCE [LARGE SCALE GENOMIC DNA]</scope>
    <source>
        <strain>104</strain>
    </source>
</reference>
<keyword id="KW-0175">Coiled coil</keyword>
<keyword id="KW-1017">Isopeptide bond</keyword>
<keyword id="KW-0833">Ubl conjugation pathway</keyword>
<gene>
    <name evidence="1" type="primary">pup</name>
    <name type="ordered locus">MAV_2403</name>
</gene>
<proteinExistence type="inferred from homology"/>
<comment type="function">
    <text evidence="1">Protein modifier that is covalently attached to lysine residues of substrate proteins, thereby targeting them for proteasomal degradation. The tagging system is termed pupylation.</text>
</comment>
<comment type="pathway">
    <text evidence="1">Protein degradation; proteasomal Pup-dependent pathway.</text>
</comment>
<comment type="subunit">
    <text evidence="1">Strongly interacts with the proteasome-associated ATPase ARC through a hydrophobic interface; the interacting region of Pup lies in its C-terminal half. There is one Pup binding site per ARC hexamer ring.</text>
</comment>
<comment type="domain">
    <text evidence="1">The N-terminal unstructured half of Pup provides a signal required to initiate unfolding and degradation by the proteasome but is not needed for pupylation, while the C-terminal helical half of Pup interacts with ARC to target proteins to the proteasome.</text>
</comment>
<comment type="PTM">
    <text evidence="1">Is modified by deamidation of its C-terminal glutamine to glutamate by the deamidase Dop, a prerequisite to the subsequent pupylation process.</text>
</comment>
<comment type="similarity">
    <text evidence="1">Belongs to the prokaryotic ubiquitin-like protein family.</text>
</comment>
<name>PUP_MYCA1</name>
<feature type="chain" id="PRO_0000390587" description="Prokaryotic ubiquitin-like protein Pup">
    <location>
        <begin position="1"/>
        <end position="64"/>
    </location>
</feature>
<feature type="region of interest" description="Disordered" evidence="2">
    <location>
        <begin position="1"/>
        <end position="37"/>
    </location>
</feature>
<feature type="region of interest" description="ARC ATPase binding" evidence="1">
    <location>
        <begin position="21"/>
        <end position="58"/>
    </location>
</feature>
<feature type="coiled-coil region" evidence="1">
    <location>
        <begin position="24"/>
        <end position="52"/>
    </location>
</feature>
<feature type="compositionally biased region" description="Basic and acidic residues" evidence="2">
    <location>
        <begin position="1"/>
        <end position="11"/>
    </location>
</feature>
<feature type="modified residue" description="Deamidated glutamine" evidence="1">
    <location>
        <position position="64"/>
    </location>
</feature>
<feature type="cross-link" description="Isoglutamyl lysine isopeptide (Gln-Lys) (interchain with K-? in acceptor proteins)" evidence="1">
    <location>
        <position position="64"/>
    </location>
</feature>